<evidence type="ECO:0000255" key="1">
    <source>
        <dbReference type="HAMAP-Rule" id="MF_01200"/>
    </source>
</evidence>
<keyword id="KW-0210">Decarboxylase</keyword>
<keyword id="KW-0456">Lyase</keyword>
<keyword id="KW-0665">Pyrimidine biosynthesis</keyword>
<accession>Q66AI1</accession>
<gene>
    <name evidence="1" type="primary">pyrF</name>
    <name type="ordered locus">YPTB2149</name>
</gene>
<comment type="function">
    <text evidence="1">Catalyzes the decarboxylation of orotidine 5'-monophosphate (OMP) to uridine 5'-monophosphate (UMP).</text>
</comment>
<comment type="catalytic activity">
    <reaction evidence="1">
        <text>orotidine 5'-phosphate + H(+) = UMP + CO2</text>
        <dbReference type="Rhea" id="RHEA:11596"/>
        <dbReference type="ChEBI" id="CHEBI:15378"/>
        <dbReference type="ChEBI" id="CHEBI:16526"/>
        <dbReference type="ChEBI" id="CHEBI:57538"/>
        <dbReference type="ChEBI" id="CHEBI:57865"/>
        <dbReference type="EC" id="4.1.1.23"/>
    </reaction>
</comment>
<comment type="pathway">
    <text evidence="1">Pyrimidine metabolism; UMP biosynthesis via de novo pathway; UMP from orotate: step 2/2.</text>
</comment>
<comment type="subunit">
    <text evidence="1">Homodimer.</text>
</comment>
<comment type="similarity">
    <text evidence="1">Belongs to the OMP decarboxylase family. Type 1 subfamily.</text>
</comment>
<name>PYRF_YERPS</name>
<sequence length="245" mass="26237">MTSATKTNNSGSISSPIVVALDYANKDAALAFADQVSPQDCRLKVGKEMFTLYGPELIRDLHQRGFDVFLDLKFHDIPNTTARAVAAAAELGVWMVNVHASGGARMMSAAKEALLPYGAQAPLLIAVTVLTSMDSEDLRDIGITISPAEQAERLAKLTWDCGLDGVVCSAHEAVRLKQVCGEDFSLVTPGIRPQGSEAGDQRRIMTPEQAVAVGVDYMVIGRPITQSPDPEKTLREILASLTKVA</sequence>
<reference key="1">
    <citation type="journal article" date="2004" name="Proc. Natl. Acad. Sci. U.S.A.">
        <title>Insights into the evolution of Yersinia pestis through whole-genome comparison with Yersinia pseudotuberculosis.</title>
        <authorList>
            <person name="Chain P.S.G."/>
            <person name="Carniel E."/>
            <person name="Larimer F.W."/>
            <person name="Lamerdin J."/>
            <person name="Stoutland P.O."/>
            <person name="Regala W.M."/>
            <person name="Georgescu A.M."/>
            <person name="Vergez L.M."/>
            <person name="Land M.L."/>
            <person name="Motin V.L."/>
            <person name="Brubaker R.R."/>
            <person name="Fowler J."/>
            <person name="Hinnebusch J."/>
            <person name="Marceau M."/>
            <person name="Medigue C."/>
            <person name="Simonet M."/>
            <person name="Chenal-Francisque V."/>
            <person name="Souza B."/>
            <person name="Dacheux D."/>
            <person name="Elliott J.M."/>
            <person name="Derbise A."/>
            <person name="Hauser L.J."/>
            <person name="Garcia E."/>
        </authorList>
    </citation>
    <scope>NUCLEOTIDE SEQUENCE [LARGE SCALE GENOMIC DNA]</scope>
    <source>
        <strain>IP32953</strain>
    </source>
</reference>
<proteinExistence type="inferred from homology"/>
<organism>
    <name type="scientific">Yersinia pseudotuberculosis serotype I (strain IP32953)</name>
    <dbReference type="NCBI Taxonomy" id="273123"/>
    <lineage>
        <taxon>Bacteria</taxon>
        <taxon>Pseudomonadati</taxon>
        <taxon>Pseudomonadota</taxon>
        <taxon>Gammaproteobacteria</taxon>
        <taxon>Enterobacterales</taxon>
        <taxon>Yersiniaceae</taxon>
        <taxon>Yersinia</taxon>
    </lineage>
</organism>
<feature type="chain" id="PRO_0000241934" description="Orotidine 5'-phosphate decarboxylase">
    <location>
        <begin position="1"/>
        <end position="245"/>
    </location>
</feature>
<feature type="active site" description="Proton donor" evidence="1">
    <location>
        <position position="73"/>
    </location>
</feature>
<feature type="binding site" evidence="1">
    <location>
        <position position="22"/>
    </location>
    <ligand>
        <name>substrate</name>
    </ligand>
</feature>
<feature type="binding site" evidence="1">
    <location>
        <position position="44"/>
    </location>
    <ligand>
        <name>substrate</name>
    </ligand>
</feature>
<feature type="binding site" evidence="1">
    <location>
        <begin position="71"/>
        <end position="80"/>
    </location>
    <ligand>
        <name>substrate</name>
    </ligand>
</feature>
<feature type="binding site" evidence="1">
    <location>
        <position position="131"/>
    </location>
    <ligand>
        <name>substrate</name>
    </ligand>
</feature>
<feature type="binding site" evidence="1">
    <location>
        <position position="192"/>
    </location>
    <ligand>
        <name>substrate</name>
    </ligand>
</feature>
<feature type="binding site" evidence="1">
    <location>
        <position position="201"/>
    </location>
    <ligand>
        <name>substrate</name>
    </ligand>
</feature>
<feature type="binding site" evidence="1">
    <location>
        <position position="221"/>
    </location>
    <ligand>
        <name>substrate</name>
    </ligand>
</feature>
<feature type="binding site" evidence="1">
    <location>
        <position position="222"/>
    </location>
    <ligand>
        <name>substrate</name>
    </ligand>
</feature>
<protein>
    <recommendedName>
        <fullName evidence="1">Orotidine 5'-phosphate decarboxylase</fullName>
        <ecNumber evidence="1">4.1.1.23</ecNumber>
    </recommendedName>
    <alternativeName>
        <fullName evidence="1">OMP decarboxylase</fullName>
        <shortName evidence="1">OMPDCase</shortName>
        <shortName evidence="1">OMPdecase</shortName>
    </alternativeName>
</protein>
<dbReference type="EC" id="4.1.1.23" evidence="1"/>
<dbReference type="EMBL" id="BX936398">
    <property type="protein sequence ID" value="CAH21387.1"/>
    <property type="molecule type" value="Genomic_DNA"/>
</dbReference>
<dbReference type="RefSeq" id="WP_011192450.1">
    <property type="nucleotide sequence ID" value="NC_006155.1"/>
</dbReference>
<dbReference type="SMR" id="Q66AI1"/>
<dbReference type="GeneID" id="49785855"/>
<dbReference type="KEGG" id="ypo:BZ17_314"/>
<dbReference type="KEGG" id="yps:YPTB2149"/>
<dbReference type="PATRIC" id="fig|273123.14.peg.332"/>
<dbReference type="UniPathway" id="UPA00070">
    <property type="reaction ID" value="UER00120"/>
</dbReference>
<dbReference type="Proteomes" id="UP000001011">
    <property type="component" value="Chromosome"/>
</dbReference>
<dbReference type="GO" id="GO:0005829">
    <property type="term" value="C:cytosol"/>
    <property type="evidence" value="ECO:0007669"/>
    <property type="project" value="TreeGrafter"/>
</dbReference>
<dbReference type="GO" id="GO:0004590">
    <property type="term" value="F:orotidine-5'-phosphate decarboxylase activity"/>
    <property type="evidence" value="ECO:0007669"/>
    <property type="project" value="UniProtKB-UniRule"/>
</dbReference>
<dbReference type="GO" id="GO:0006207">
    <property type="term" value="P:'de novo' pyrimidine nucleobase biosynthetic process"/>
    <property type="evidence" value="ECO:0007669"/>
    <property type="project" value="InterPro"/>
</dbReference>
<dbReference type="GO" id="GO:0044205">
    <property type="term" value="P:'de novo' UMP biosynthetic process"/>
    <property type="evidence" value="ECO:0007669"/>
    <property type="project" value="UniProtKB-UniRule"/>
</dbReference>
<dbReference type="CDD" id="cd04725">
    <property type="entry name" value="OMP_decarboxylase_like"/>
    <property type="match status" value="1"/>
</dbReference>
<dbReference type="FunFam" id="3.20.20.70:FF:000015">
    <property type="entry name" value="Orotidine 5'-phosphate decarboxylase"/>
    <property type="match status" value="1"/>
</dbReference>
<dbReference type="Gene3D" id="3.20.20.70">
    <property type="entry name" value="Aldolase class I"/>
    <property type="match status" value="1"/>
</dbReference>
<dbReference type="HAMAP" id="MF_01200_B">
    <property type="entry name" value="OMPdecase_type1_B"/>
    <property type="match status" value="1"/>
</dbReference>
<dbReference type="InterPro" id="IPR013785">
    <property type="entry name" value="Aldolase_TIM"/>
</dbReference>
<dbReference type="InterPro" id="IPR014732">
    <property type="entry name" value="OMPdecase"/>
</dbReference>
<dbReference type="InterPro" id="IPR018089">
    <property type="entry name" value="OMPdecase_AS"/>
</dbReference>
<dbReference type="InterPro" id="IPR047596">
    <property type="entry name" value="OMPdecase_bac"/>
</dbReference>
<dbReference type="InterPro" id="IPR001754">
    <property type="entry name" value="OMPdeCOase_dom"/>
</dbReference>
<dbReference type="InterPro" id="IPR011060">
    <property type="entry name" value="RibuloseP-bd_barrel"/>
</dbReference>
<dbReference type="NCBIfam" id="NF001273">
    <property type="entry name" value="PRK00230.1"/>
    <property type="match status" value="1"/>
</dbReference>
<dbReference type="NCBIfam" id="TIGR01740">
    <property type="entry name" value="pyrF"/>
    <property type="match status" value="1"/>
</dbReference>
<dbReference type="PANTHER" id="PTHR32119">
    <property type="entry name" value="OROTIDINE 5'-PHOSPHATE DECARBOXYLASE"/>
    <property type="match status" value="1"/>
</dbReference>
<dbReference type="PANTHER" id="PTHR32119:SF2">
    <property type="entry name" value="OROTIDINE 5'-PHOSPHATE DECARBOXYLASE"/>
    <property type="match status" value="1"/>
</dbReference>
<dbReference type="Pfam" id="PF00215">
    <property type="entry name" value="OMPdecase"/>
    <property type="match status" value="1"/>
</dbReference>
<dbReference type="SMART" id="SM00934">
    <property type="entry name" value="OMPdecase"/>
    <property type="match status" value="1"/>
</dbReference>
<dbReference type="SUPFAM" id="SSF51366">
    <property type="entry name" value="Ribulose-phoshate binding barrel"/>
    <property type="match status" value="1"/>
</dbReference>
<dbReference type="PROSITE" id="PS00156">
    <property type="entry name" value="OMPDECASE"/>
    <property type="match status" value="1"/>
</dbReference>